<organism>
    <name type="scientific">Salmonella choleraesuis (strain SC-B67)</name>
    <dbReference type="NCBI Taxonomy" id="321314"/>
    <lineage>
        <taxon>Bacteria</taxon>
        <taxon>Pseudomonadati</taxon>
        <taxon>Pseudomonadota</taxon>
        <taxon>Gammaproteobacteria</taxon>
        <taxon>Enterobacterales</taxon>
        <taxon>Enterobacteriaceae</taxon>
        <taxon>Salmonella</taxon>
    </lineage>
</organism>
<gene>
    <name evidence="1" type="primary">ubiD</name>
    <name type="ordered locus">SCH_3876</name>
</gene>
<dbReference type="EC" id="4.1.1.98" evidence="1"/>
<dbReference type="EMBL" id="AE017220">
    <property type="protein sequence ID" value="AAX67782.1"/>
    <property type="molecule type" value="Genomic_DNA"/>
</dbReference>
<dbReference type="SMR" id="Q57HN0"/>
<dbReference type="KEGG" id="sec:SCH_3876"/>
<dbReference type="HOGENOM" id="CLU_023348_4_1_6"/>
<dbReference type="UniPathway" id="UPA00232"/>
<dbReference type="Proteomes" id="UP000000538">
    <property type="component" value="Chromosome"/>
</dbReference>
<dbReference type="GO" id="GO:0005829">
    <property type="term" value="C:cytosol"/>
    <property type="evidence" value="ECO:0007669"/>
    <property type="project" value="TreeGrafter"/>
</dbReference>
<dbReference type="GO" id="GO:0005886">
    <property type="term" value="C:plasma membrane"/>
    <property type="evidence" value="ECO:0007669"/>
    <property type="project" value="UniProtKB-SubCell"/>
</dbReference>
<dbReference type="GO" id="GO:0008694">
    <property type="term" value="F:3-octaprenyl-4-hydroxybenzoate carboxy-lyase activity"/>
    <property type="evidence" value="ECO:0007669"/>
    <property type="project" value="UniProtKB-UniRule"/>
</dbReference>
<dbReference type="GO" id="GO:0046872">
    <property type="term" value="F:metal ion binding"/>
    <property type="evidence" value="ECO:0007669"/>
    <property type="project" value="UniProtKB-KW"/>
</dbReference>
<dbReference type="GO" id="GO:0006744">
    <property type="term" value="P:ubiquinone biosynthetic process"/>
    <property type="evidence" value="ECO:0007669"/>
    <property type="project" value="UniProtKB-UniRule"/>
</dbReference>
<dbReference type="FunFam" id="1.20.5.570:FF:000001">
    <property type="entry name" value="3-octaprenyl-4-hydroxybenzoate carboxy-lyase"/>
    <property type="match status" value="1"/>
</dbReference>
<dbReference type="FunFam" id="3.40.1670.10:FF:000001">
    <property type="entry name" value="3-octaprenyl-4-hydroxybenzoate carboxy-lyase"/>
    <property type="match status" value="1"/>
</dbReference>
<dbReference type="Gene3D" id="1.20.5.570">
    <property type="entry name" value="Single helix bin"/>
    <property type="match status" value="1"/>
</dbReference>
<dbReference type="Gene3D" id="3.40.1670.10">
    <property type="entry name" value="UbiD C-terminal domain-like"/>
    <property type="match status" value="1"/>
</dbReference>
<dbReference type="HAMAP" id="MF_01636">
    <property type="entry name" value="UbiD"/>
    <property type="match status" value="1"/>
</dbReference>
<dbReference type="InterPro" id="IPR002830">
    <property type="entry name" value="UbiD"/>
</dbReference>
<dbReference type="InterPro" id="IPR049381">
    <property type="entry name" value="UbiD-like_C"/>
</dbReference>
<dbReference type="InterPro" id="IPR049383">
    <property type="entry name" value="UbiD-like_N"/>
</dbReference>
<dbReference type="InterPro" id="IPR023677">
    <property type="entry name" value="UbiD_bacteria"/>
</dbReference>
<dbReference type="InterPro" id="IPR048304">
    <property type="entry name" value="UbiD_Rift_dom"/>
</dbReference>
<dbReference type="NCBIfam" id="NF008175">
    <property type="entry name" value="PRK10922.1"/>
    <property type="match status" value="1"/>
</dbReference>
<dbReference type="NCBIfam" id="TIGR00148">
    <property type="entry name" value="UbiD family decarboxylase"/>
    <property type="match status" value="1"/>
</dbReference>
<dbReference type="PANTHER" id="PTHR30108">
    <property type="entry name" value="3-OCTAPRENYL-4-HYDROXYBENZOATE CARBOXY-LYASE-RELATED"/>
    <property type="match status" value="1"/>
</dbReference>
<dbReference type="PANTHER" id="PTHR30108:SF17">
    <property type="entry name" value="FERULIC ACID DECARBOXYLASE 1"/>
    <property type="match status" value="1"/>
</dbReference>
<dbReference type="Pfam" id="PF01977">
    <property type="entry name" value="UbiD"/>
    <property type="match status" value="1"/>
</dbReference>
<dbReference type="Pfam" id="PF20696">
    <property type="entry name" value="UbiD_C"/>
    <property type="match status" value="1"/>
</dbReference>
<dbReference type="Pfam" id="PF20695">
    <property type="entry name" value="UbiD_N"/>
    <property type="match status" value="1"/>
</dbReference>
<dbReference type="SUPFAM" id="SSF50475">
    <property type="entry name" value="FMN-binding split barrel"/>
    <property type="match status" value="1"/>
</dbReference>
<dbReference type="SUPFAM" id="SSF143968">
    <property type="entry name" value="UbiD C-terminal domain-like"/>
    <property type="match status" value="1"/>
</dbReference>
<reference key="1">
    <citation type="journal article" date="2005" name="Nucleic Acids Res.">
        <title>The genome sequence of Salmonella enterica serovar Choleraesuis, a highly invasive and resistant zoonotic pathogen.</title>
        <authorList>
            <person name="Chiu C.-H."/>
            <person name="Tang P."/>
            <person name="Chu C."/>
            <person name="Hu S."/>
            <person name="Bao Q."/>
            <person name="Yu J."/>
            <person name="Chou Y.-Y."/>
            <person name="Wang H.-S."/>
            <person name="Lee Y.-S."/>
        </authorList>
    </citation>
    <scope>NUCLEOTIDE SEQUENCE [LARGE SCALE GENOMIC DNA]</scope>
    <source>
        <strain>SC-B67</strain>
    </source>
</reference>
<keyword id="KW-1003">Cell membrane</keyword>
<keyword id="KW-0210">Decarboxylase</keyword>
<keyword id="KW-0285">Flavoprotein</keyword>
<keyword id="KW-0288">FMN</keyword>
<keyword id="KW-0456">Lyase</keyword>
<keyword id="KW-0464">Manganese</keyword>
<keyword id="KW-0472">Membrane</keyword>
<keyword id="KW-0479">Metal-binding</keyword>
<keyword id="KW-0831">Ubiquinone biosynthesis</keyword>
<accession>Q57HN0</accession>
<protein>
    <recommendedName>
        <fullName evidence="1">3-octaprenyl-4-hydroxybenzoate carboxy-lyase</fullName>
        <ecNumber evidence="1">4.1.1.98</ecNumber>
    </recommendedName>
    <alternativeName>
        <fullName evidence="1">Polyprenyl p-hydroxybenzoate decarboxylase</fullName>
    </alternativeName>
</protein>
<evidence type="ECO:0000255" key="1">
    <source>
        <dbReference type="HAMAP-Rule" id="MF_01636"/>
    </source>
</evidence>
<sequence>MDAMKYHDLRDFLTLLEQQGELKRITLPVDPHLEITEIADRTLRAGGPALLFENPKGYAMPVLCNLFGTPKRVAMGMGQDDVSALREVGKLLAFLKEPEPPKGFRDLFDKLPQFKQVLNMPTKRLRGAPCQQKIASGDDVDLTRLPVMTCWPDDAAPLITWGLTVTRGPHKERQNLGIYRQQLIGKNKLIMRWLSHRGGALDFQEWLAAHPGERFPVSVALGADPATILGAVTPVPDTLSEYAFAGLLRGTKTEVVKCLSNDLEVPASAEIILEGYIEPGEMAPEGPYGDHTGYYNEVDNFPVFTVTHITQREDAIYHSTYTGRPPDEPAVLGVALNEVFVPILQKQFPEIVDFYLPPEGCSYRLAVVTMKKQYAGHAKRVMMGVWSFLRQFMYTKFVIVCDDDVNARDWNDVIWAITTRMDPARDTVLVENTPIDYLDFASPVSGLGSKMGLDATNKWPGETQREWGRPIVKDPEVTARIDAIWDELAIFK</sequence>
<name>UBID_SALCH</name>
<comment type="function">
    <text evidence="1">Catalyzes the decarboxylation of 3-octaprenyl-4-hydroxy benzoate to 2-octaprenylphenol, an intermediate step in ubiquinone biosynthesis.</text>
</comment>
<comment type="catalytic activity">
    <reaction evidence="1">
        <text>a 4-hydroxy-3-(all-trans-polyprenyl)benzoate + H(+) = a 2-(all-trans-polyprenyl)phenol + CO2</text>
        <dbReference type="Rhea" id="RHEA:41680"/>
        <dbReference type="Rhea" id="RHEA-COMP:9514"/>
        <dbReference type="Rhea" id="RHEA-COMP:9516"/>
        <dbReference type="ChEBI" id="CHEBI:1269"/>
        <dbReference type="ChEBI" id="CHEBI:15378"/>
        <dbReference type="ChEBI" id="CHEBI:16526"/>
        <dbReference type="ChEBI" id="CHEBI:78396"/>
        <dbReference type="EC" id="4.1.1.98"/>
    </reaction>
</comment>
<comment type="cofactor">
    <cofactor evidence="1">
        <name>prenylated FMN</name>
        <dbReference type="ChEBI" id="CHEBI:87746"/>
    </cofactor>
    <text evidence="1">Binds 1 prenylated FMN per subunit.</text>
</comment>
<comment type="cofactor">
    <cofactor evidence="1">
        <name>Mn(2+)</name>
        <dbReference type="ChEBI" id="CHEBI:29035"/>
    </cofactor>
</comment>
<comment type="pathway">
    <text evidence="1">Cofactor biosynthesis; ubiquinone biosynthesis.</text>
</comment>
<comment type="subunit">
    <text evidence="1">Homohexamer.</text>
</comment>
<comment type="subcellular location">
    <subcellularLocation>
        <location evidence="1">Cell membrane</location>
        <topology evidence="1">Peripheral membrane protein</topology>
    </subcellularLocation>
</comment>
<comment type="similarity">
    <text evidence="1">Belongs to the UbiD family.</text>
</comment>
<feature type="chain" id="PRO_0000267691" description="3-octaprenyl-4-hydroxybenzoate carboxy-lyase">
    <location>
        <begin position="1"/>
        <end position="492"/>
    </location>
</feature>
<feature type="active site" description="Proton donor" evidence="1">
    <location>
        <position position="290"/>
    </location>
</feature>
<feature type="binding site" evidence="1">
    <location>
        <position position="175"/>
    </location>
    <ligand>
        <name>Mn(2+)</name>
        <dbReference type="ChEBI" id="CHEBI:29035"/>
    </ligand>
</feature>
<feature type="binding site" evidence="1">
    <location>
        <begin position="178"/>
        <end position="180"/>
    </location>
    <ligand>
        <name>prenylated FMN</name>
        <dbReference type="ChEBI" id="CHEBI:87746"/>
    </ligand>
</feature>
<feature type="binding site" evidence="1">
    <location>
        <begin position="192"/>
        <end position="194"/>
    </location>
    <ligand>
        <name>prenylated FMN</name>
        <dbReference type="ChEBI" id="CHEBI:87746"/>
    </ligand>
</feature>
<feature type="binding site" evidence="1">
    <location>
        <begin position="197"/>
        <end position="198"/>
    </location>
    <ligand>
        <name>prenylated FMN</name>
        <dbReference type="ChEBI" id="CHEBI:87746"/>
    </ligand>
</feature>
<feature type="binding site" evidence="1">
    <location>
        <position position="241"/>
    </location>
    <ligand>
        <name>Mn(2+)</name>
        <dbReference type="ChEBI" id="CHEBI:29035"/>
    </ligand>
</feature>
<proteinExistence type="inferred from homology"/>